<sequence length="728" mass="80875">MATPGSEPQPFVPALSVATLHPLHHPHHHHHHHQHHGGTGAPGGAGGGGGGSGGFNLPLNRGLERALEEAANSGGLNLSARKLKEFPRTAAPGHDLSDTVQADLSKNRLVEVPMELCHFVSLEILNLYHNCIRVIPEAIVNLQMLTYLNLSRNQLSALPACLCGLPLKVLIASNNKLGSLPEEIGQLKQLMELDVSCNEITALPQQIGQLKSLRELNVRRNYLKVLPQELVDLSLVKFDFSCNKVLVIPICFREMKQLQVLLLENNPLQSPPAQICTKGKVHIFKYLSIQACQIKTADSLYLHTMERPHLHQHVEDGKKDSDSGVGSDNGDKRLSATEPSDEDTVSLNVPMSNIMEEEQIIKEDSCHRLSPVKGEFHQEFQPEPSLLGDSTNSGEERDQFTDRADGLHSEFMNYKARAEDCEELLRIEEDVHWQTEGIISSSKDQDMDIAMIEQLREAVDLLQDPNGLSTDITERSVLNLYPMGSAEALELQDSALNGQIQLETSPVCEVQSDLTLQSNGSQYSPNEIRENSPAVSPTTNSTAPFGLKPRSVFLRPQRNLESIDPQFTIRRKMEQMREEKELVEQLRESIEMRLKVSLHEDLGAALMDGVVLCHLVNHIRPRSVASIHVPSPAVPKLSMAKCRRNVENFLEACRKLGVPEADLCSPCDILQLDFRHIRKTVDTLLALGEKAPPPTSALRSRDLIGFCLVHILFIVLVYITYHWNALSA</sequence>
<accession>Q9Y2L9</accession>
<accession>B7ZLL5</accession>
<accession>F8W6F0</accession>
<accession>Q17R43</accession>
<accession>Q2KHR1</accession>
<accession>Q5TBU9</accession>
<accession>Q7Z5F6</accession>
<accession>Q7Z5F7</accession>
<dbReference type="EMBL" id="AY050631">
    <property type="protein sequence ID" value="AAK95567.1"/>
    <property type="molecule type" value="mRNA"/>
</dbReference>
<dbReference type="EMBL" id="AY050632">
    <property type="protein sequence ID" value="AAK95568.1"/>
    <property type="molecule type" value="mRNA"/>
</dbReference>
<dbReference type="EMBL" id="AB023233">
    <property type="protein sequence ID" value="BAA76860.1"/>
    <property type="status" value="ALT_INIT"/>
    <property type="molecule type" value="mRNA"/>
</dbReference>
<dbReference type="EMBL" id="AL136958">
    <property type="status" value="NOT_ANNOTATED_CDS"/>
    <property type="molecule type" value="Genomic_DNA"/>
</dbReference>
<dbReference type="EMBL" id="AL138704">
    <property type="status" value="NOT_ANNOTATED_CDS"/>
    <property type="molecule type" value="Genomic_DNA"/>
</dbReference>
<dbReference type="EMBL" id="AL359880">
    <property type="status" value="NOT_ANNOTATED_CDS"/>
    <property type="molecule type" value="Genomic_DNA"/>
</dbReference>
<dbReference type="EMBL" id="BC112937">
    <property type="protein sequence ID" value="AAI12938.1"/>
    <property type="molecule type" value="mRNA"/>
</dbReference>
<dbReference type="EMBL" id="BC117472">
    <property type="protein sequence ID" value="AAI17473.1"/>
    <property type="molecule type" value="mRNA"/>
</dbReference>
<dbReference type="EMBL" id="BC143883">
    <property type="protein sequence ID" value="AAI43884.1"/>
    <property type="molecule type" value="mRNA"/>
</dbReference>
<dbReference type="CCDS" id="CCDS31972.1">
    <molecule id="Q9Y2L9-1"/>
</dbReference>
<dbReference type="CCDS" id="CCDS53865.1">
    <molecule id="Q9Y2L9-3"/>
</dbReference>
<dbReference type="CCDS" id="CCDS53866.1">
    <molecule id="Q9Y2L9-2"/>
</dbReference>
<dbReference type="RefSeq" id="NP_001157683.2">
    <molecule id="Q9Y2L9-3"/>
    <property type="nucleotide sequence ID" value="NM_001164211.2"/>
</dbReference>
<dbReference type="RefSeq" id="NP_001157685.2">
    <molecule id="Q9Y2L9-2"/>
    <property type="nucleotide sequence ID" value="NM_001164213.2"/>
</dbReference>
<dbReference type="RefSeq" id="NP_055931.2">
    <molecule id="Q9Y2L9-1"/>
    <property type="nucleotide sequence ID" value="NM_015116.3"/>
</dbReference>
<dbReference type="SMR" id="Q9Y2L9"/>
<dbReference type="BioGRID" id="116760">
    <property type="interactions" value="64"/>
</dbReference>
<dbReference type="FunCoup" id="Q9Y2L9">
    <property type="interactions" value="1668"/>
</dbReference>
<dbReference type="IntAct" id="Q9Y2L9">
    <property type="interactions" value="48"/>
</dbReference>
<dbReference type="MINT" id="Q9Y2L9"/>
<dbReference type="STRING" id="9606.ENSP00000374447"/>
<dbReference type="GlyGen" id="Q9Y2L9">
    <property type="glycosylation" value="3 sites, 1 O-linked glycan (1 site)"/>
</dbReference>
<dbReference type="iPTMnet" id="Q9Y2L9"/>
<dbReference type="PhosphoSitePlus" id="Q9Y2L9"/>
<dbReference type="BioMuta" id="LRCH1"/>
<dbReference type="DMDM" id="296439310"/>
<dbReference type="jPOST" id="Q9Y2L9"/>
<dbReference type="MassIVE" id="Q9Y2L9"/>
<dbReference type="PaxDb" id="9606-ENSP00000374447"/>
<dbReference type="PeptideAtlas" id="Q9Y2L9"/>
<dbReference type="ProteomicsDB" id="29771"/>
<dbReference type="ProteomicsDB" id="85839">
    <molecule id="Q9Y2L9-1"/>
</dbReference>
<dbReference type="ProteomicsDB" id="85840">
    <molecule id="Q9Y2L9-2"/>
</dbReference>
<dbReference type="Pumba" id="Q9Y2L9"/>
<dbReference type="Antibodypedia" id="9206">
    <property type="antibodies" value="141 antibodies from 21 providers"/>
</dbReference>
<dbReference type="DNASU" id="23143"/>
<dbReference type="Ensembl" id="ENST00000311191.10">
    <molecule id="Q9Y2L9-2"/>
    <property type="protein sequence ID" value="ENSP00000308493.5"/>
    <property type="gene ID" value="ENSG00000136141.15"/>
</dbReference>
<dbReference type="Ensembl" id="ENST00000389797.8">
    <molecule id="Q9Y2L9-3"/>
    <property type="protein sequence ID" value="ENSP00000374447.3"/>
    <property type="gene ID" value="ENSG00000136141.15"/>
</dbReference>
<dbReference type="Ensembl" id="ENST00000389798.7">
    <molecule id="Q9Y2L9-1"/>
    <property type="protein sequence ID" value="ENSP00000374448.3"/>
    <property type="gene ID" value="ENSG00000136141.15"/>
</dbReference>
<dbReference type="GeneID" id="23143"/>
<dbReference type="KEGG" id="hsa:23143"/>
<dbReference type="MANE-Select" id="ENST00000389797.8">
    <molecule id="Q9Y2L9-3"/>
    <property type="protein sequence ID" value="ENSP00000374447.3"/>
    <property type="RefSeq nucleotide sequence ID" value="NM_001164211.2"/>
    <property type="RefSeq protein sequence ID" value="NP_001157683.2"/>
</dbReference>
<dbReference type="UCSC" id="uc001vbj.4">
    <molecule id="Q9Y2L9-1"/>
    <property type="organism name" value="human"/>
</dbReference>
<dbReference type="AGR" id="HGNC:20309"/>
<dbReference type="CTD" id="23143"/>
<dbReference type="DisGeNET" id="23143"/>
<dbReference type="GeneCards" id="LRCH1"/>
<dbReference type="HGNC" id="HGNC:20309">
    <property type="gene designation" value="LRCH1"/>
</dbReference>
<dbReference type="HPA" id="ENSG00000136141">
    <property type="expression patterns" value="Low tissue specificity"/>
</dbReference>
<dbReference type="MIM" id="610368">
    <property type="type" value="gene"/>
</dbReference>
<dbReference type="neXtProt" id="NX_Q9Y2L9"/>
<dbReference type="OpenTargets" id="ENSG00000136141"/>
<dbReference type="PharmGKB" id="PA134898200"/>
<dbReference type="VEuPathDB" id="HostDB:ENSG00000136141"/>
<dbReference type="eggNOG" id="KOG0532">
    <property type="taxonomic scope" value="Eukaryota"/>
</dbReference>
<dbReference type="eggNOG" id="KOG0619">
    <property type="taxonomic scope" value="Eukaryota"/>
</dbReference>
<dbReference type="GeneTree" id="ENSGT00940000159528"/>
<dbReference type="HOGENOM" id="CLU_008231_2_0_1"/>
<dbReference type="InParanoid" id="Q9Y2L9"/>
<dbReference type="OMA" id="KEDVCHR"/>
<dbReference type="OrthoDB" id="6149831at2759"/>
<dbReference type="PAN-GO" id="Q9Y2L9">
    <property type="GO annotations" value="3 GO annotations based on evolutionary models"/>
</dbReference>
<dbReference type="PhylomeDB" id="Q9Y2L9"/>
<dbReference type="TreeFam" id="TF318428"/>
<dbReference type="PathwayCommons" id="Q9Y2L9"/>
<dbReference type="SignaLink" id="Q9Y2L9"/>
<dbReference type="BioGRID-ORCS" id="23143">
    <property type="hits" value="11 hits in 1154 CRISPR screens"/>
</dbReference>
<dbReference type="ChiTaRS" id="LRCH1">
    <property type="organism name" value="human"/>
</dbReference>
<dbReference type="GenomeRNAi" id="23143"/>
<dbReference type="Pharos" id="Q9Y2L9">
    <property type="development level" value="Tbio"/>
</dbReference>
<dbReference type="PRO" id="PR:Q9Y2L9"/>
<dbReference type="Proteomes" id="UP000005640">
    <property type="component" value="Chromosome 13"/>
</dbReference>
<dbReference type="RNAct" id="Q9Y2L9">
    <property type="molecule type" value="protein"/>
</dbReference>
<dbReference type="Bgee" id="ENSG00000136141">
    <property type="expression patterns" value="Expressed in cerebellar cortex and 164 other cell types or tissues"/>
</dbReference>
<dbReference type="ExpressionAtlas" id="Q9Y2L9">
    <property type="expression patterns" value="baseline and differential"/>
</dbReference>
<dbReference type="GO" id="GO:0005737">
    <property type="term" value="C:cytoplasm"/>
    <property type="evidence" value="ECO:0000315"/>
    <property type="project" value="UniProtKB"/>
</dbReference>
<dbReference type="GO" id="GO:1990869">
    <property type="term" value="P:cellular response to chemokine"/>
    <property type="evidence" value="ECO:0000315"/>
    <property type="project" value="UniProtKB"/>
</dbReference>
<dbReference type="GO" id="GO:0034260">
    <property type="term" value="P:negative regulation of GTPase activity"/>
    <property type="evidence" value="ECO:0000314"/>
    <property type="project" value="UniProtKB"/>
</dbReference>
<dbReference type="GO" id="GO:2000405">
    <property type="term" value="P:negative regulation of T cell migration"/>
    <property type="evidence" value="ECO:0000315"/>
    <property type="project" value="UniProtKB"/>
</dbReference>
<dbReference type="CDD" id="cd21270">
    <property type="entry name" value="CH_LRCH1"/>
    <property type="match status" value="1"/>
</dbReference>
<dbReference type="FunFam" id="1.10.418.10:FF:000021">
    <property type="entry name" value="Leucine-rich repeat and calponin homology domain-containing protein 1 isoform 3"/>
    <property type="match status" value="1"/>
</dbReference>
<dbReference type="FunFam" id="3.80.10.10:FF:000007">
    <property type="entry name" value="Leucine-rich repeat and calponin homology domain-containing protein 1 isoform 3"/>
    <property type="match status" value="1"/>
</dbReference>
<dbReference type="Gene3D" id="1.10.418.10">
    <property type="entry name" value="Calponin-like domain"/>
    <property type="match status" value="1"/>
</dbReference>
<dbReference type="Gene3D" id="3.80.10.10">
    <property type="entry name" value="Ribonuclease Inhibitor"/>
    <property type="match status" value="1"/>
</dbReference>
<dbReference type="InterPro" id="IPR001715">
    <property type="entry name" value="CH_dom"/>
</dbReference>
<dbReference type="InterPro" id="IPR036872">
    <property type="entry name" value="CH_dom_sf"/>
</dbReference>
<dbReference type="InterPro" id="IPR001611">
    <property type="entry name" value="Leu-rich_rpt"/>
</dbReference>
<dbReference type="InterPro" id="IPR003591">
    <property type="entry name" value="Leu-rich_rpt_typical-subtyp"/>
</dbReference>
<dbReference type="InterPro" id="IPR032675">
    <property type="entry name" value="LRR_dom_sf"/>
</dbReference>
<dbReference type="InterPro" id="IPR050216">
    <property type="entry name" value="LRR_domain-containing"/>
</dbReference>
<dbReference type="PANTHER" id="PTHR48051">
    <property type="match status" value="1"/>
</dbReference>
<dbReference type="PANTHER" id="PTHR48051:SF38">
    <property type="entry name" value="LEUCINE RICH REPEATS AND CALPONIN HOMOLOGY DOMAIN CONTAINING 1"/>
    <property type="match status" value="1"/>
</dbReference>
<dbReference type="Pfam" id="PF00307">
    <property type="entry name" value="CH"/>
    <property type="match status" value="1"/>
</dbReference>
<dbReference type="Pfam" id="PF13855">
    <property type="entry name" value="LRR_8"/>
    <property type="match status" value="2"/>
</dbReference>
<dbReference type="SMART" id="SM00033">
    <property type="entry name" value="CH"/>
    <property type="match status" value="1"/>
</dbReference>
<dbReference type="SMART" id="SM00364">
    <property type="entry name" value="LRR_BAC"/>
    <property type="match status" value="4"/>
</dbReference>
<dbReference type="SMART" id="SM00369">
    <property type="entry name" value="LRR_TYP"/>
    <property type="match status" value="5"/>
</dbReference>
<dbReference type="SUPFAM" id="SSF47576">
    <property type="entry name" value="Calponin-homology domain, CH-domain"/>
    <property type="match status" value="1"/>
</dbReference>
<dbReference type="SUPFAM" id="SSF52058">
    <property type="entry name" value="L domain-like"/>
    <property type="match status" value="1"/>
</dbReference>
<dbReference type="PROSITE" id="PS50021">
    <property type="entry name" value="CH"/>
    <property type="match status" value="1"/>
</dbReference>
<dbReference type="PROSITE" id="PS51450">
    <property type="entry name" value="LRR"/>
    <property type="match status" value="6"/>
</dbReference>
<name>LRCH1_HUMAN</name>
<proteinExistence type="evidence at protein level"/>
<keyword id="KW-0025">Alternative splicing</keyword>
<keyword id="KW-0963">Cytoplasm</keyword>
<keyword id="KW-0433">Leucine-rich repeat</keyword>
<keyword id="KW-0597">Phosphoprotein</keyword>
<keyword id="KW-1267">Proteomics identification</keyword>
<keyword id="KW-1185">Reference proteome</keyword>
<keyword id="KW-0677">Repeat</keyword>
<protein>
    <recommendedName>
        <fullName>Leucine-rich repeat and calponin homology domain-containing protein 1</fullName>
    </recommendedName>
    <alternativeName>
        <fullName>Calponin homology domain-containing protein 1</fullName>
    </alternativeName>
    <alternativeName>
        <fullName>Neuronal protein 81</fullName>
        <shortName>NP81</shortName>
    </alternativeName>
</protein>
<comment type="function">
    <text evidence="6">Acts as a negative regulator of GTPase CDC42 by sequestering CDC42-guanine exchange factor DOCK8. Probably by preventing CDC42 activation, negatively regulates CD4(+) T-cell migration.</text>
</comment>
<comment type="subunit">
    <text evidence="6">Interacts (via LRR repeats) with unphosphorylated DOCK8 (via DHR-2 domain); the interaction prevents the interaction between DOCK8 and CDC42.</text>
</comment>
<comment type="interaction">
    <interactant intactId="EBI-2797324">
        <id>Q9Y2L9</id>
    </interactant>
    <interactant intactId="EBI-2433703">
        <id>Q96N67</id>
        <label>DOCK7</label>
    </interactant>
    <organismsDiffer>false</organismsDiffer>
    <experiments>6</experiments>
</comment>
<comment type="interaction">
    <interactant intactId="EBI-2797324">
        <id>Q9Y2L9</id>
    </interactant>
    <interactant intactId="EBI-2548605">
        <id>Q8NF50</id>
        <label>DOCK8</label>
    </interactant>
    <organismsDiffer>false</organismsDiffer>
    <experiments>5</experiments>
</comment>
<comment type="interaction">
    <interactant intactId="EBI-2797324">
        <id>Q9Y2L9</id>
    </interactant>
    <interactant intactId="EBI-10174653">
        <id>Q8NF50-2</id>
        <label>DOCK8</label>
    </interactant>
    <organismsDiffer>false</organismsDiffer>
    <experiments>5</experiments>
</comment>
<comment type="interaction">
    <interactant intactId="EBI-12082218">
        <id>Q9Y2L9-3</id>
    </interactant>
    <interactant intactId="EBI-2800360">
        <id>Q9Y6G1</id>
        <label>TMEM14A</label>
    </interactant>
    <organismsDiffer>false</organismsDiffer>
    <experiments>3</experiments>
</comment>
<comment type="interaction">
    <interactant intactId="EBI-12082218">
        <id>Q9Y2L9-3</id>
    </interactant>
    <interactant intactId="EBI-8638294">
        <id>Q9NUH8</id>
        <label>TMEM14B</label>
    </interactant>
    <organismsDiffer>false</organismsDiffer>
    <experiments>3</experiments>
</comment>
<comment type="subcellular location">
    <subcellularLocation>
        <location evidence="6">Cytoplasm</location>
    </subcellularLocation>
</comment>
<comment type="alternative products">
    <event type="alternative splicing"/>
    <isoform>
        <id>Q9Y2L9-1</id>
        <name>1</name>
        <name>b</name>
        <name>NP81b</name>
        <sequence type="displayed"/>
    </isoform>
    <isoform>
        <id>Q9Y2L9-2</id>
        <name>2</name>
        <name>a</name>
        <name>NP81a</name>
        <sequence type="described" ref="VSP_010635 VSP_010636"/>
    </isoform>
    <isoform>
        <id>Q9Y2L9-3</id>
        <name>3</name>
        <sequence type="described" ref="VSP_044474"/>
    </isoform>
</comment>
<comment type="sequence caution" evidence="10">
    <conflict type="erroneous initiation">
        <sequence resource="EMBL-CDS" id="BAA76860"/>
    </conflict>
    <text>Extended N-terminus.</text>
</comment>
<gene>
    <name type="primary">LRCH1</name>
    <name type="synonym">CHDC1</name>
    <name type="synonym">KIAA1016</name>
</gene>
<evidence type="ECO:0000250" key="1">
    <source>
        <dbReference type="UniProtKB" id="P62046"/>
    </source>
</evidence>
<evidence type="ECO:0000255" key="2">
    <source>
        <dbReference type="PROSITE-ProRule" id="PRU00044"/>
    </source>
</evidence>
<evidence type="ECO:0000256" key="3">
    <source>
        <dbReference type="SAM" id="MobiDB-lite"/>
    </source>
</evidence>
<evidence type="ECO:0000269" key="4">
    <source>
    </source>
</evidence>
<evidence type="ECO:0000269" key="5">
    <source>
    </source>
</evidence>
<evidence type="ECO:0000269" key="6">
    <source>
    </source>
</evidence>
<evidence type="ECO:0000269" key="7">
    <source ref="1"/>
</evidence>
<evidence type="ECO:0000303" key="8">
    <source>
    </source>
</evidence>
<evidence type="ECO:0000303" key="9">
    <source ref="1"/>
</evidence>
<evidence type="ECO:0000305" key="10"/>
<evidence type="ECO:0007744" key="11">
    <source>
    </source>
</evidence>
<evidence type="ECO:0007744" key="12">
    <source>
    </source>
</evidence>
<evidence type="ECO:0007744" key="13">
    <source>
    </source>
</evidence>
<reference key="1">
    <citation type="submission" date="2001-08" db="EMBL/GenBank/DDBJ databases">
        <title>Cloning and characterizing of human NP81 (neuronal protein) gene.</title>
        <authorList>
            <person name="Guo J.H."/>
            <person name="Yu L."/>
        </authorList>
    </citation>
    <scope>NUCLEOTIDE SEQUENCE [LARGE SCALE MRNA] (ISOFORMS 1 AND 2)</scope>
    <scope>VARIANT PRO-234</scope>
</reference>
<reference key="2">
    <citation type="journal article" date="1999" name="DNA Res.">
        <title>Prediction of the coding sequences of unidentified human genes. XIII. The complete sequences of 100 new cDNA clones from brain which code for large proteins in vitro.</title>
        <authorList>
            <person name="Nagase T."/>
            <person name="Ishikawa K."/>
            <person name="Suyama M."/>
            <person name="Kikuno R."/>
            <person name="Hirosawa M."/>
            <person name="Miyajima N."/>
            <person name="Tanaka A."/>
            <person name="Kotani H."/>
            <person name="Nomura N."/>
            <person name="Ohara O."/>
        </authorList>
    </citation>
    <scope>NUCLEOTIDE SEQUENCE [LARGE SCALE MRNA] (ISOFORM 1)</scope>
    <scope>VARIANT PRO-234</scope>
    <source>
        <tissue>Brain</tissue>
    </source>
</reference>
<reference key="3">
    <citation type="journal article" date="2002" name="DNA Res.">
        <title>Construction of expression-ready cDNA clones for KIAA genes: manual curation of 330 KIAA cDNA clones.</title>
        <authorList>
            <person name="Nakajima D."/>
            <person name="Okazaki N."/>
            <person name="Yamakawa H."/>
            <person name="Kikuno R."/>
            <person name="Ohara O."/>
            <person name="Nagase T."/>
        </authorList>
    </citation>
    <scope>SEQUENCE REVISION</scope>
</reference>
<reference key="4">
    <citation type="journal article" date="2004" name="Nature">
        <title>The DNA sequence and analysis of human chromosome 13.</title>
        <authorList>
            <person name="Dunham A."/>
            <person name="Matthews L.H."/>
            <person name="Burton J."/>
            <person name="Ashurst J.L."/>
            <person name="Howe K.L."/>
            <person name="Ashcroft K.J."/>
            <person name="Beare D.M."/>
            <person name="Burford D.C."/>
            <person name="Hunt S.E."/>
            <person name="Griffiths-Jones S."/>
            <person name="Jones M.C."/>
            <person name="Keenan S.J."/>
            <person name="Oliver K."/>
            <person name="Scott C.E."/>
            <person name="Ainscough R."/>
            <person name="Almeida J.P."/>
            <person name="Ambrose K.D."/>
            <person name="Andrews D.T."/>
            <person name="Ashwell R.I.S."/>
            <person name="Babbage A.K."/>
            <person name="Bagguley C.L."/>
            <person name="Bailey J."/>
            <person name="Bannerjee R."/>
            <person name="Barlow K.F."/>
            <person name="Bates K."/>
            <person name="Beasley H."/>
            <person name="Bird C.P."/>
            <person name="Bray-Allen S."/>
            <person name="Brown A.J."/>
            <person name="Brown J.Y."/>
            <person name="Burrill W."/>
            <person name="Carder C."/>
            <person name="Carter N.P."/>
            <person name="Chapman J.C."/>
            <person name="Clamp M.E."/>
            <person name="Clark S.Y."/>
            <person name="Clarke G."/>
            <person name="Clee C.M."/>
            <person name="Clegg S.C."/>
            <person name="Cobley V."/>
            <person name="Collins J.E."/>
            <person name="Corby N."/>
            <person name="Coville G.J."/>
            <person name="Deloukas P."/>
            <person name="Dhami P."/>
            <person name="Dunham I."/>
            <person name="Dunn M."/>
            <person name="Earthrowl M.E."/>
            <person name="Ellington A.G."/>
            <person name="Faulkner L."/>
            <person name="Frankish A.G."/>
            <person name="Frankland J."/>
            <person name="French L."/>
            <person name="Garner P."/>
            <person name="Garnett J."/>
            <person name="Gilbert J.G.R."/>
            <person name="Gilson C.J."/>
            <person name="Ghori J."/>
            <person name="Grafham D.V."/>
            <person name="Gribble S.M."/>
            <person name="Griffiths C."/>
            <person name="Hall R.E."/>
            <person name="Hammond S."/>
            <person name="Harley J.L."/>
            <person name="Hart E.A."/>
            <person name="Heath P.D."/>
            <person name="Howden P.J."/>
            <person name="Huckle E.J."/>
            <person name="Hunt P.J."/>
            <person name="Hunt A.R."/>
            <person name="Johnson C."/>
            <person name="Johnson D."/>
            <person name="Kay M."/>
            <person name="Kimberley A.M."/>
            <person name="King A."/>
            <person name="Laird G.K."/>
            <person name="Langford C.J."/>
            <person name="Lawlor S."/>
            <person name="Leongamornlert D.A."/>
            <person name="Lloyd D.M."/>
            <person name="Lloyd C."/>
            <person name="Loveland J.E."/>
            <person name="Lovell J."/>
            <person name="Martin S."/>
            <person name="Mashreghi-Mohammadi M."/>
            <person name="McLaren S.J."/>
            <person name="McMurray A."/>
            <person name="Milne S."/>
            <person name="Moore M.J.F."/>
            <person name="Nickerson T."/>
            <person name="Palmer S.A."/>
            <person name="Pearce A.V."/>
            <person name="Peck A.I."/>
            <person name="Pelan S."/>
            <person name="Phillimore B."/>
            <person name="Porter K.M."/>
            <person name="Rice C.M."/>
            <person name="Searle S."/>
            <person name="Sehra H.K."/>
            <person name="Shownkeen R."/>
            <person name="Skuce C.D."/>
            <person name="Smith M."/>
            <person name="Steward C.A."/>
            <person name="Sycamore N."/>
            <person name="Tester J."/>
            <person name="Thomas D.W."/>
            <person name="Tracey A."/>
            <person name="Tromans A."/>
            <person name="Tubby B."/>
            <person name="Wall M."/>
            <person name="Wallis J.M."/>
            <person name="West A.P."/>
            <person name="Whitehead S.L."/>
            <person name="Willey D.L."/>
            <person name="Wilming L."/>
            <person name="Wray P.W."/>
            <person name="Wright M.W."/>
            <person name="Young L."/>
            <person name="Coulson A."/>
            <person name="Durbin R.M."/>
            <person name="Hubbard T."/>
            <person name="Sulston J.E."/>
            <person name="Beck S."/>
            <person name="Bentley D.R."/>
            <person name="Rogers J."/>
            <person name="Ross M.T."/>
        </authorList>
    </citation>
    <scope>NUCLEOTIDE SEQUENCE [LARGE SCALE GENOMIC DNA]</scope>
</reference>
<reference key="5">
    <citation type="journal article" date="2004" name="Genome Res.">
        <title>The status, quality, and expansion of the NIH full-length cDNA project: the Mammalian Gene Collection (MGC).</title>
        <authorList>
            <consortium name="The MGC Project Team"/>
        </authorList>
    </citation>
    <scope>NUCLEOTIDE SEQUENCE [LARGE SCALE MRNA] (ISOFORMS 2 AND 3)</scope>
    <scope>VARIANT PRO-234</scope>
    <source>
        <tissue>Brain</tissue>
        <tissue>Lung</tissue>
    </source>
</reference>
<reference key="6">
    <citation type="journal article" date="2008" name="Proc. Natl. Acad. Sci. U.S.A.">
        <title>A quantitative atlas of mitotic phosphorylation.</title>
        <authorList>
            <person name="Dephoure N."/>
            <person name="Zhou C."/>
            <person name="Villen J."/>
            <person name="Beausoleil S.A."/>
            <person name="Bakalarski C.E."/>
            <person name="Elledge S.J."/>
            <person name="Gygi S.P."/>
        </authorList>
    </citation>
    <scope>PHOSPHORYLATION [LARGE SCALE ANALYSIS] AT THR-568</scope>
    <scope>IDENTIFICATION BY MASS SPECTROMETRY [LARGE SCALE ANALYSIS]</scope>
    <source>
        <tissue>Cervix carcinoma</tissue>
    </source>
</reference>
<reference key="7">
    <citation type="journal article" date="2013" name="J. Proteome Res.">
        <title>Toward a comprehensive characterization of a human cancer cell phosphoproteome.</title>
        <authorList>
            <person name="Zhou H."/>
            <person name="Di Palma S."/>
            <person name="Preisinger C."/>
            <person name="Peng M."/>
            <person name="Polat A.N."/>
            <person name="Heck A.J."/>
            <person name="Mohammed S."/>
        </authorList>
    </citation>
    <scope>PHOSPHORYLATION [LARGE SCALE ANALYSIS] AT SER-532; SER-536 AND THR-568</scope>
    <scope>IDENTIFICATION BY MASS SPECTROMETRY [LARGE SCALE ANALYSIS]</scope>
    <source>
        <tissue>Cervix carcinoma</tissue>
        <tissue>Erythroleukemia</tissue>
    </source>
</reference>
<reference key="8">
    <citation type="journal article" date="2014" name="J. Proteomics">
        <title>An enzyme assisted RP-RPLC approach for in-depth analysis of human liver phosphoproteome.</title>
        <authorList>
            <person name="Bian Y."/>
            <person name="Song C."/>
            <person name="Cheng K."/>
            <person name="Dong M."/>
            <person name="Wang F."/>
            <person name="Huang J."/>
            <person name="Sun D."/>
            <person name="Wang L."/>
            <person name="Ye M."/>
            <person name="Zou H."/>
        </authorList>
    </citation>
    <scope>PHOSPHORYLATION [LARGE SCALE ANALYSIS] AT SER-370</scope>
    <scope>IDENTIFICATION BY MASS SPECTROMETRY [LARGE SCALE ANALYSIS]</scope>
    <source>
        <tissue>Liver</tissue>
    </source>
</reference>
<reference key="9">
    <citation type="journal article" date="2017" name="J. Exp. Med.">
        <title>LRCH1 interferes with DOCK8-Cdc42-induced T cell migration and ameliorates experimental autoimmune encephalomyelitis.</title>
        <authorList>
            <person name="Xu X."/>
            <person name="Han L."/>
            <person name="Zhao G."/>
            <person name="Xue S."/>
            <person name="Gao Y."/>
            <person name="Xiao J."/>
            <person name="Zhang S."/>
            <person name="Chen P."/>
            <person name="Wu Z.Y."/>
            <person name="Ding J."/>
            <person name="Hu R."/>
            <person name="Wei B."/>
            <person name="Wang H."/>
        </authorList>
    </citation>
    <scope>FUNCTION</scope>
    <scope>INTERACTION WITH DOCK8</scope>
    <scope>SUBCELLULAR LOCATION</scope>
</reference>
<feature type="chain" id="PRO_0000084478" description="Leucine-rich repeat and calponin homology domain-containing protein 1">
    <location>
        <begin position="1"/>
        <end position="728"/>
    </location>
</feature>
<feature type="repeat" description="LRR 1">
    <location>
        <begin position="98"/>
        <end position="119"/>
    </location>
</feature>
<feature type="repeat" description="LRR 2">
    <location>
        <begin position="121"/>
        <end position="143"/>
    </location>
</feature>
<feature type="repeat" description="LRR 3">
    <location>
        <begin position="144"/>
        <end position="166"/>
    </location>
</feature>
<feature type="repeat" description="LRR 4">
    <location>
        <begin position="167"/>
        <end position="187"/>
    </location>
</feature>
<feature type="repeat" description="LRR 5">
    <location>
        <begin position="189"/>
        <end position="210"/>
    </location>
</feature>
<feature type="repeat" description="LRR 6">
    <location>
        <begin position="212"/>
        <end position="234"/>
    </location>
</feature>
<feature type="repeat" description="LRR 7">
    <location>
        <begin position="235"/>
        <end position="255"/>
    </location>
</feature>
<feature type="repeat" description="LRR 8">
    <location>
        <begin position="257"/>
        <end position="278"/>
    </location>
</feature>
<feature type="repeat" description="LRR 9">
    <location>
        <begin position="283"/>
        <end position="304"/>
    </location>
</feature>
<feature type="domain" description="Calponin-homology (CH)" evidence="2">
    <location>
        <begin position="576"/>
        <end position="692"/>
    </location>
</feature>
<feature type="region of interest" description="Disordered" evidence="3">
    <location>
        <begin position="24"/>
        <end position="57"/>
    </location>
</feature>
<feature type="region of interest" description="Disordered" evidence="3">
    <location>
        <begin position="311"/>
        <end position="348"/>
    </location>
</feature>
<feature type="region of interest" description="Disordered" evidence="3">
    <location>
        <begin position="377"/>
        <end position="398"/>
    </location>
</feature>
<feature type="region of interest" description="Disordered" evidence="3">
    <location>
        <begin position="516"/>
        <end position="547"/>
    </location>
</feature>
<feature type="compositionally biased region" description="Basic residues" evidence="3">
    <location>
        <begin position="24"/>
        <end position="36"/>
    </location>
</feature>
<feature type="compositionally biased region" description="Gly residues" evidence="3">
    <location>
        <begin position="37"/>
        <end position="54"/>
    </location>
</feature>
<feature type="compositionally biased region" description="Basic and acidic residues" evidence="3">
    <location>
        <begin position="311"/>
        <end position="322"/>
    </location>
</feature>
<feature type="compositionally biased region" description="Polar residues" evidence="3">
    <location>
        <begin position="516"/>
        <end position="525"/>
    </location>
</feature>
<feature type="compositionally biased region" description="Polar residues" evidence="3">
    <location>
        <begin position="533"/>
        <end position="543"/>
    </location>
</feature>
<feature type="modified residue" description="Phosphoserine" evidence="13">
    <location>
        <position position="370"/>
    </location>
</feature>
<feature type="modified residue" description="Phosphoserine" evidence="1">
    <location>
        <position position="409"/>
    </location>
</feature>
<feature type="modified residue" description="Phosphoserine" evidence="12">
    <location>
        <position position="532"/>
    </location>
</feature>
<feature type="modified residue" description="Phosphoserine" evidence="12">
    <location>
        <position position="536"/>
    </location>
</feature>
<feature type="modified residue" description="Phosphothreonine" evidence="11 12">
    <location>
        <position position="568"/>
    </location>
</feature>
<feature type="splice variant" id="VSP_044474" description="In isoform 3." evidence="8">
    <original>S</original>
    <variation>SDPALILPPISFNTLTQAQTWDSSSYSVPSEGDSDN</variation>
    <location>
        <position position="551"/>
    </location>
</feature>
<feature type="splice variant" id="VSP_010635" description="In isoform 2." evidence="8 9">
    <original>ADLCSPCDILQLDFRHIRKTVDTLLALGEKAPPPTS</original>
    <variation>EKLCLPHHILEEKGLVKVGITIQALLDITVTKALFT</variation>
    <location>
        <begin position="661"/>
        <end position="696"/>
    </location>
</feature>
<feature type="splice variant" id="VSP_010636" description="In isoform 2." evidence="8 9">
    <location>
        <begin position="697"/>
        <end position="728"/>
    </location>
</feature>
<feature type="sequence variant" id="VAR_051133" description="In dbSNP:rs842381." evidence="4 5 7">
    <original>S</original>
    <variation>P</variation>
    <location>
        <position position="234"/>
    </location>
</feature>
<feature type="sequence variant" id="VAR_051134" description="In dbSNP:rs11617392.">
    <original>A</original>
    <variation>S</variation>
    <location>
        <position position="486"/>
    </location>
</feature>
<feature type="sequence conflict" description="In Ref. 5; AAI43884." evidence="10" ref="5">
    <original>G</original>
    <variation>V</variation>
    <location>
        <position position="326"/>
    </location>
</feature>
<organism>
    <name type="scientific">Homo sapiens</name>
    <name type="common">Human</name>
    <dbReference type="NCBI Taxonomy" id="9606"/>
    <lineage>
        <taxon>Eukaryota</taxon>
        <taxon>Metazoa</taxon>
        <taxon>Chordata</taxon>
        <taxon>Craniata</taxon>
        <taxon>Vertebrata</taxon>
        <taxon>Euteleostomi</taxon>
        <taxon>Mammalia</taxon>
        <taxon>Eutheria</taxon>
        <taxon>Euarchontoglires</taxon>
        <taxon>Primates</taxon>
        <taxon>Haplorrhini</taxon>
        <taxon>Catarrhini</taxon>
        <taxon>Hominidae</taxon>
        <taxon>Homo</taxon>
    </lineage>
</organism>